<keyword id="KW-0021">Allosteric enzyme</keyword>
<keyword id="KW-0328">Glycosyltransferase</keyword>
<keyword id="KW-0342">GTP-binding</keyword>
<keyword id="KW-0460">Magnesium</keyword>
<keyword id="KW-0547">Nucleotide-binding</keyword>
<keyword id="KW-1185">Reference proteome</keyword>
<keyword id="KW-0808">Transferase</keyword>
<gene>
    <name evidence="1" type="primary">upp</name>
    <name type="ordered locus">BCAN_B1089</name>
</gene>
<proteinExistence type="inferred from homology"/>
<evidence type="ECO:0000255" key="1">
    <source>
        <dbReference type="HAMAP-Rule" id="MF_01218"/>
    </source>
</evidence>
<feature type="chain" id="PRO_1000085621" description="Uracil phosphoribosyltransferase">
    <location>
        <begin position="1"/>
        <end position="208"/>
    </location>
</feature>
<feature type="binding site" evidence="1">
    <location>
        <position position="78"/>
    </location>
    <ligand>
        <name>5-phospho-alpha-D-ribose 1-diphosphate</name>
        <dbReference type="ChEBI" id="CHEBI:58017"/>
    </ligand>
</feature>
<feature type="binding site" evidence="1">
    <location>
        <position position="103"/>
    </location>
    <ligand>
        <name>5-phospho-alpha-D-ribose 1-diphosphate</name>
        <dbReference type="ChEBI" id="CHEBI:58017"/>
    </ligand>
</feature>
<feature type="binding site" evidence="1">
    <location>
        <begin position="130"/>
        <end position="138"/>
    </location>
    <ligand>
        <name>5-phospho-alpha-D-ribose 1-diphosphate</name>
        <dbReference type="ChEBI" id="CHEBI:58017"/>
    </ligand>
</feature>
<feature type="binding site" evidence="1">
    <location>
        <position position="193"/>
    </location>
    <ligand>
        <name>uracil</name>
        <dbReference type="ChEBI" id="CHEBI:17568"/>
    </ligand>
</feature>
<feature type="binding site" evidence="1">
    <location>
        <begin position="198"/>
        <end position="200"/>
    </location>
    <ligand>
        <name>uracil</name>
        <dbReference type="ChEBI" id="CHEBI:17568"/>
    </ligand>
</feature>
<feature type="binding site" evidence="1">
    <location>
        <position position="199"/>
    </location>
    <ligand>
        <name>5-phospho-alpha-D-ribose 1-diphosphate</name>
        <dbReference type="ChEBI" id="CHEBI:58017"/>
    </ligand>
</feature>
<reference key="1">
    <citation type="submission" date="2007-10" db="EMBL/GenBank/DDBJ databases">
        <title>Brucella canis ATCC 23365 whole genome shotgun sequencing project.</title>
        <authorList>
            <person name="Setubal J.C."/>
            <person name="Bowns C."/>
            <person name="Boyle S."/>
            <person name="Crasta O.R."/>
            <person name="Czar M.J."/>
            <person name="Dharmanolla C."/>
            <person name="Gillespie J.J."/>
            <person name="Kenyon R.W."/>
            <person name="Lu J."/>
            <person name="Mane S."/>
            <person name="Mohapatra S."/>
            <person name="Nagrani S."/>
            <person name="Purkayastha A."/>
            <person name="Rajasimha H.K."/>
            <person name="Shallom J.M."/>
            <person name="Shallom S."/>
            <person name="Shukla M."/>
            <person name="Snyder E.E."/>
            <person name="Sobral B.W."/>
            <person name="Wattam A.R."/>
            <person name="Will R."/>
            <person name="Williams K."/>
            <person name="Yoo H."/>
            <person name="Bruce D."/>
            <person name="Detter C."/>
            <person name="Munk C."/>
            <person name="Brettin T.S."/>
        </authorList>
    </citation>
    <scope>NUCLEOTIDE SEQUENCE [LARGE SCALE GENOMIC DNA]</scope>
    <source>
        <strain>ATCC 23365 / NCTC 10854 / RM-666</strain>
    </source>
</reference>
<organism>
    <name type="scientific">Brucella canis (strain ATCC 23365 / NCTC 10854 / RM-666)</name>
    <dbReference type="NCBI Taxonomy" id="483179"/>
    <lineage>
        <taxon>Bacteria</taxon>
        <taxon>Pseudomonadati</taxon>
        <taxon>Pseudomonadota</taxon>
        <taxon>Alphaproteobacteria</taxon>
        <taxon>Hyphomicrobiales</taxon>
        <taxon>Brucellaceae</taxon>
        <taxon>Brucella/Ochrobactrum group</taxon>
        <taxon>Brucella</taxon>
    </lineage>
</organism>
<dbReference type="EC" id="2.4.2.9" evidence="1"/>
<dbReference type="EMBL" id="CP000873">
    <property type="protein sequence ID" value="ABX64230.1"/>
    <property type="molecule type" value="Genomic_DNA"/>
</dbReference>
<dbReference type="RefSeq" id="WP_004690415.1">
    <property type="nucleotide sequence ID" value="NC_010104.1"/>
</dbReference>
<dbReference type="SMR" id="A9MCZ3"/>
<dbReference type="GeneID" id="55592687"/>
<dbReference type="KEGG" id="bcs:BCAN_B1089"/>
<dbReference type="HOGENOM" id="CLU_067096_2_2_5"/>
<dbReference type="PhylomeDB" id="A9MCZ3"/>
<dbReference type="UniPathway" id="UPA00574">
    <property type="reaction ID" value="UER00636"/>
</dbReference>
<dbReference type="Proteomes" id="UP000001385">
    <property type="component" value="Chromosome II"/>
</dbReference>
<dbReference type="GO" id="GO:0005525">
    <property type="term" value="F:GTP binding"/>
    <property type="evidence" value="ECO:0007669"/>
    <property type="project" value="UniProtKB-KW"/>
</dbReference>
<dbReference type="GO" id="GO:0000287">
    <property type="term" value="F:magnesium ion binding"/>
    <property type="evidence" value="ECO:0007669"/>
    <property type="project" value="UniProtKB-UniRule"/>
</dbReference>
<dbReference type="GO" id="GO:0004845">
    <property type="term" value="F:uracil phosphoribosyltransferase activity"/>
    <property type="evidence" value="ECO:0007669"/>
    <property type="project" value="UniProtKB-UniRule"/>
</dbReference>
<dbReference type="GO" id="GO:0044206">
    <property type="term" value="P:UMP salvage"/>
    <property type="evidence" value="ECO:0007669"/>
    <property type="project" value="UniProtKB-UniRule"/>
</dbReference>
<dbReference type="GO" id="GO:0006223">
    <property type="term" value="P:uracil salvage"/>
    <property type="evidence" value="ECO:0007669"/>
    <property type="project" value="InterPro"/>
</dbReference>
<dbReference type="CDD" id="cd06223">
    <property type="entry name" value="PRTases_typeI"/>
    <property type="match status" value="1"/>
</dbReference>
<dbReference type="FunFam" id="3.40.50.2020:FF:000003">
    <property type="entry name" value="Uracil phosphoribosyltransferase"/>
    <property type="match status" value="1"/>
</dbReference>
<dbReference type="Gene3D" id="3.40.50.2020">
    <property type="match status" value="1"/>
</dbReference>
<dbReference type="HAMAP" id="MF_01218_B">
    <property type="entry name" value="Upp_B"/>
    <property type="match status" value="1"/>
</dbReference>
<dbReference type="InterPro" id="IPR000836">
    <property type="entry name" value="PRibTrfase_dom"/>
</dbReference>
<dbReference type="InterPro" id="IPR029057">
    <property type="entry name" value="PRTase-like"/>
</dbReference>
<dbReference type="InterPro" id="IPR034332">
    <property type="entry name" value="Upp_B"/>
</dbReference>
<dbReference type="InterPro" id="IPR050054">
    <property type="entry name" value="UPRTase/APRTase"/>
</dbReference>
<dbReference type="InterPro" id="IPR005765">
    <property type="entry name" value="Ura_phspho_trans"/>
</dbReference>
<dbReference type="NCBIfam" id="NF001097">
    <property type="entry name" value="PRK00129.1"/>
    <property type="match status" value="1"/>
</dbReference>
<dbReference type="NCBIfam" id="TIGR01091">
    <property type="entry name" value="upp"/>
    <property type="match status" value="1"/>
</dbReference>
<dbReference type="PANTHER" id="PTHR32315">
    <property type="entry name" value="ADENINE PHOSPHORIBOSYLTRANSFERASE"/>
    <property type="match status" value="1"/>
</dbReference>
<dbReference type="PANTHER" id="PTHR32315:SF4">
    <property type="entry name" value="URACIL PHOSPHORIBOSYLTRANSFERASE, CHLOROPLASTIC"/>
    <property type="match status" value="1"/>
</dbReference>
<dbReference type="Pfam" id="PF14681">
    <property type="entry name" value="UPRTase"/>
    <property type="match status" value="1"/>
</dbReference>
<dbReference type="SUPFAM" id="SSF53271">
    <property type="entry name" value="PRTase-like"/>
    <property type="match status" value="1"/>
</dbReference>
<name>UPP_BRUC2</name>
<comment type="function">
    <text evidence="1">Catalyzes the conversion of uracil and 5-phospho-alpha-D-ribose 1-diphosphate (PRPP) to UMP and diphosphate.</text>
</comment>
<comment type="catalytic activity">
    <reaction evidence="1">
        <text>UMP + diphosphate = 5-phospho-alpha-D-ribose 1-diphosphate + uracil</text>
        <dbReference type="Rhea" id="RHEA:13017"/>
        <dbReference type="ChEBI" id="CHEBI:17568"/>
        <dbReference type="ChEBI" id="CHEBI:33019"/>
        <dbReference type="ChEBI" id="CHEBI:57865"/>
        <dbReference type="ChEBI" id="CHEBI:58017"/>
        <dbReference type="EC" id="2.4.2.9"/>
    </reaction>
</comment>
<comment type="cofactor">
    <cofactor evidence="1">
        <name>Mg(2+)</name>
        <dbReference type="ChEBI" id="CHEBI:18420"/>
    </cofactor>
    <text evidence="1">Binds 1 Mg(2+) ion per subunit. The magnesium is bound as Mg-PRPP.</text>
</comment>
<comment type="activity regulation">
    <text evidence="1">Allosterically activated by GTP.</text>
</comment>
<comment type="pathway">
    <text evidence="1">Pyrimidine metabolism; UMP biosynthesis via salvage pathway; UMP from uracil: step 1/1.</text>
</comment>
<comment type="similarity">
    <text evidence="1">Belongs to the UPRTase family.</text>
</comment>
<accession>A9MCZ3</accession>
<protein>
    <recommendedName>
        <fullName evidence="1">Uracil phosphoribosyltransferase</fullName>
        <ecNumber evidence="1">2.4.2.9</ecNumber>
    </recommendedName>
    <alternativeName>
        <fullName evidence="1">UMP pyrophosphorylase</fullName>
    </alternativeName>
    <alternativeName>
        <fullName evidence="1">UPRTase</fullName>
    </alternativeName>
</protein>
<sequence length="208" mass="23019">MGVTVVSHPLVQHKLTIMRKKETSTASFQRLLKEISLLLCYEVTRNLELTTMSIETPLMPMEAPVLEGKKLVFASILRAGNGLLEGMLDLVPAARVAHIGLYRDHDTLQPIEYYFKAPEDIVNRLVIVVDPMLATANSAIAAIDKLKERGATNIRFLCLLAAPEGIERFTKAHPDVEVFTASIDERLDEKGYIVPGLGDAGDRMYGTK</sequence>